<accession>A1VYJ2</accession>
<sequence>MTRSEKVEIIAKLEEGFKASEAIVVCNYRGLSTKKLEELRNNARENNVKVQIVKNTLANIALNNSGKTGLVLKDTNIYLWGEDQLSVSKVAAKFEENNDKFEIKTAHIEGEVADVAKVKALAKMPSRNELLAMLLQVWNAPITNFTIGLNALKNKKESE</sequence>
<feature type="chain" id="PRO_1000005484" description="Large ribosomal subunit protein uL10">
    <location>
        <begin position="1"/>
        <end position="159"/>
    </location>
</feature>
<organism>
    <name type="scientific">Campylobacter jejuni subsp. jejuni serotype O:23/36 (strain 81-176)</name>
    <dbReference type="NCBI Taxonomy" id="354242"/>
    <lineage>
        <taxon>Bacteria</taxon>
        <taxon>Pseudomonadati</taxon>
        <taxon>Campylobacterota</taxon>
        <taxon>Epsilonproteobacteria</taxon>
        <taxon>Campylobacterales</taxon>
        <taxon>Campylobacteraceae</taxon>
        <taxon>Campylobacter</taxon>
    </lineage>
</organism>
<gene>
    <name evidence="1" type="primary">rplJ</name>
    <name type="ordered locus">CJJ81176_0507</name>
</gene>
<keyword id="KW-0687">Ribonucleoprotein</keyword>
<keyword id="KW-0689">Ribosomal protein</keyword>
<keyword id="KW-0694">RNA-binding</keyword>
<keyword id="KW-0699">rRNA-binding</keyword>
<reference key="1">
    <citation type="submission" date="2006-12" db="EMBL/GenBank/DDBJ databases">
        <authorList>
            <person name="Fouts D.E."/>
            <person name="Nelson K.E."/>
            <person name="Sebastian Y."/>
        </authorList>
    </citation>
    <scope>NUCLEOTIDE SEQUENCE [LARGE SCALE GENOMIC DNA]</scope>
    <source>
        <strain>81-176</strain>
    </source>
</reference>
<protein>
    <recommendedName>
        <fullName evidence="1">Large ribosomal subunit protein uL10</fullName>
    </recommendedName>
    <alternativeName>
        <fullName evidence="2">50S ribosomal protein L10</fullName>
    </alternativeName>
</protein>
<name>RL10_CAMJJ</name>
<evidence type="ECO:0000255" key="1">
    <source>
        <dbReference type="HAMAP-Rule" id="MF_00362"/>
    </source>
</evidence>
<evidence type="ECO:0000305" key="2"/>
<proteinExistence type="inferred from homology"/>
<comment type="function">
    <text evidence="1">Forms part of the ribosomal stalk, playing a central role in the interaction of the ribosome with GTP-bound translation factors.</text>
</comment>
<comment type="subunit">
    <text evidence="1">Part of the ribosomal stalk of the 50S ribosomal subunit. The N-terminus interacts with L11 and the large rRNA to form the base of the stalk. The C-terminus forms an elongated spine to which L12 dimers bind in a sequential fashion forming a multimeric L10(L12)X complex.</text>
</comment>
<comment type="similarity">
    <text evidence="1">Belongs to the universal ribosomal protein uL10 family.</text>
</comment>
<dbReference type="EMBL" id="CP000538">
    <property type="protein sequence ID" value="EAQ72990.1"/>
    <property type="molecule type" value="Genomic_DNA"/>
</dbReference>
<dbReference type="RefSeq" id="WP_002858610.1">
    <property type="nucleotide sequence ID" value="NC_008787.1"/>
</dbReference>
<dbReference type="SMR" id="A1VYJ2"/>
<dbReference type="KEGG" id="cjj:CJJ81176_0507"/>
<dbReference type="eggNOG" id="COG0244">
    <property type="taxonomic scope" value="Bacteria"/>
</dbReference>
<dbReference type="HOGENOM" id="CLU_092227_2_2_7"/>
<dbReference type="Proteomes" id="UP000000646">
    <property type="component" value="Chromosome"/>
</dbReference>
<dbReference type="GO" id="GO:0015934">
    <property type="term" value="C:large ribosomal subunit"/>
    <property type="evidence" value="ECO:0007669"/>
    <property type="project" value="InterPro"/>
</dbReference>
<dbReference type="GO" id="GO:0070180">
    <property type="term" value="F:large ribosomal subunit rRNA binding"/>
    <property type="evidence" value="ECO:0007669"/>
    <property type="project" value="UniProtKB-UniRule"/>
</dbReference>
<dbReference type="GO" id="GO:0003735">
    <property type="term" value="F:structural constituent of ribosome"/>
    <property type="evidence" value="ECO:0007669"/>
    <property type="project" value="InterPro"/>
</dbReference>
<dbReference type="GO" id="GO:0006412">
    <property type="term" value="P:translation"/>
    <property type="evidence" value="ECO:0007669"/>
    <property type="project" value="UniProtKB-UniRule"/>
</dbReference>
<dbReference type="CDD" id="cd05797">
    <property type="entry name" value="Ribosomal_L10"/>
    <property type="match status" value="1"/>
</dbReference>
<dbReference type="Gene3D" id="3.30.70.1730">
    <property type="match status" value="1"/>
</dbReference>
<dbReference type="Gene3D" id="6.10.250.290">
    <property type="match status" value="1"/>
</dbReference>
<dbReference type="HAMAP" id="MF_00362">
    <property type="entry name" value="Ribosomal_uL10"/>
    <property type="match status" value="1"/>
</dbReference>
<dbReference type="InterPro" id="IPR001790">
    <property type="entry name" value="Ribosomal_uL10"/>
</dbReference>
<dbReference type="InterPro" id="IPR043141">
    <property type="entry name" value="Ribosomal_uL10-like_sf"/>
</dbReference>
<dbReference type="InterPro" id="IPR022973">
    <property type="entry name" value="Ribosomal_uL10_bac"/>
</dbReference>
<dbReference type="InterPro" id="IPR047865">
    <property type="entry name" value="Ribosomal_uL10_bac_type"/>
</dbReference>
<dbReference type="InterPro" id="IPR002363">
    <property type="entry name" value="Ribosomal_uL10_CS_bac"/>
</dbReference>
<dbReference type="NCBIfam" id="NF000955">
    <property type="entry name" value="PRK00099.1-1"/>
    <property type="match status" value="1"/>
</dbReference>
<dbReference type="PANTHER" id="PTHR11560">
    <property type="entry name" value="39S RIBOSOMAL PROTEIN L10, MITOCHONDRIAL"/>
    <property type="match status" value="1"/>
</dbReference>
<dbReference type="Pfam" id="PF00466">
    <property type="entry name" value="Ribosomal_L10"/>
    <property type="match status" value="1"/>
</dbReference>
<dbReference type="SUPFAM" id="SSF160369">
    <property type="entry name" value="Ribosomal protein L10-like"/>
    <property type="match status" value="1"/>
</dbReference>
<dbReference type="PROSITE" id="PS01109">
    <property type="entry name" value="RIBOSOMAL_L10"/>
    <property type="match status" value="1"/>
</dbReference>